<name>RS3_BRUA1</name>
<keyword id="KW-0687">Ribonucleoprotein</keyword>
<keyword id="KW-0689">Ribosomal protein</keyword>
<keyword id="KW-0694">RNA-binding</keyword>
<keyword id="KW-0699">rRNA-binding</keyword>
<sequence>MGQKINPIGLRLGINRTWDSRWYANTGEYGKLLHEDVKIREFLTEELKQAAISKIVIERPHKKCRVTIHSARPGIIIGKKGADIEKLRKKLSEMTNADTSLNIVEVRKPEVDATLIAQSIAQQLERRVAFRRAMKRAVQSAMRLGAEGIRINCSGRLGGAEIARMEWYREGRVPLHTLRADIDYGTAEAKTAYGICGVKVWVFKGEILEHDPMASERRAVEGDNQGSSSNRRRENA</sequence>
<feature type="chain" id="PRO_1000140929" description="Small ribosomal subunit protein uS3">
    <location>
        <begin position="1"/>
        <end position="236"/>
    </location>
</feature>
<feature type="domain" description="KH type-2" evidence="1">
    <location>
        <begin position="39"/>
        <end position="107"/>
    </location>
</feature>
<feature type="region of interest" description="Disordered" evidence="2">
    <location>
        <begin position="214"/>
        <end position="236"/>
    </location>
</feature>
<gene>
    <name evidence="1" type="primary">rpsC</name>
    <name type="ordered locus">BAbS19_I11650</name>
</gene>
<accession>B2S673</accession>
<organism>
    <name type="scientific">Brucella abortus (strain S19)</name>
    <dbReference type="NCBI Taxonomy" id="430066"/>
    <lineage>
        <taxon>Bacteria</taxon>
        <taxon>Pseudomonadati</taxon>
        <taxon>Pseudomonadota</taxon>
        <taxon>Alphaproteobacteria</taxon>
        <taxon>Hyphomicrobiales</taxon>
        <taxon>Brucellaceae</taxon>
        <taxon>Brucella/Ochrobactrum group</taxon>
        <taxon>Brucella</taxon>
    </lineage>
</organism>
<evidence type="ECO:0000255" key="1">
    <source>
        <dbReference type="HAMAP-Rule" id="MF_01309"/>
    </source>
</evidence>
<evidence type="ECO:0000256" key="2">
    <source>
        <dbReference type="SAM" id="MobiDB-lite"/>
    </source>
</evidence>
<evidence type="ECO:0000305" key="3"/>
<comment type="function">
    <text evidence="1">Binds the lower part of the 30S subunit head. Binds mRNA in the 70S ribosome, positioning it for translation.</text>
</comment>
<comment type="subunit">
    <text evidence="1">Part of the 30S ribosomal subunit. Forms a tight complex with proteins S10 and S14.</text>
</comment>
<comment type="similarity">
    <text evidence="1">Belongs to the universal ribosomal protein uS3 family.</text>
</comment>
<reference key="1">
    <citation type="journal article" date="2008" name="PLoS ONE">
        <title>Genome sequence of Brucella abortus vaccine strain S19 compared to virulent strains yields candidate virulence genes.</title>
        <authorList>
            <person name="Crasta O.R."/>
            <person name="Folkerts O."/>
            <person name="Fei Z."/>
            <person name="Mane S.P."/>
            <person name="Evans C."/>
            <person name="Martino-Catt S."/>
            <person name="Bricker B."/>
            <person name="Yu G."/>
            <person name="Du L."/>
            <person name="Sobral B.W."/>
        </authorList>
    </citation>
    <scope>NUCLEOTIDE SEQUENCE [LARGE SCALE GENOMIC DNA]</scope>
    <source>
        <strain>S19</strain>
    </source>
</reference>
<proteinExistence type="inferred from homology"/>
<dbReference type="EMBL" id="CP000887">
    <property type="protein sequence ID" value="ACD72670.1"/>
    <property type="molecule type" value="Genomic_DNA"/>
</dbReference>
<dbReference type="RefSeq" id="WP_002964356.1">
    <property type="nucleotide sequence ID" value="NC_010742.1"/>
</dbReference>
<dbReference type="SMR" id="B2S673"/>
<dbReference type="GeneID" id="97533530"/>
<dbReference type="KEGG" id="bmc:BAbS19_I11650"/>
<dbReference type="HOGENOM" id="CLU_058591_0_2_5"/>
<dbReference type="Proteomes" id="UP000002565">
    <property type="component" value="Chromosome 1"/>
</dbReference>
<dbReference type="GO" id="GO:0022627">
    <property type="term" value="C:cytosolic small ribosomal subunit"/>
    <property type="evidence" value="ECO:0007669"/>
    <property type="project" value="TreeGrafter"/>
</dbReference>
<dbReference type="GO" id="GO:0003729">
    <property type="term" value="F:mRNA binding"/>
    <property type="evidence" value="ECO:0007669"/>
    <property type="project" value="UniProtKB-UniRule"/>
</dbReference>
<dbReference type="GO" id="GO:0019843">
    <property type="term" value="F:rRNA binding"/>
    <property type="evidence" value="ECO:0007669"/>
    <property type="project" value="UniProtKB-UniRule"/>
</dbReference>
<dbReference type="GO" id="GO:0003735">
    <property type="term" value="F:structural constituent of ribosome"/>
    <property type="evidence" value="ECO:0007669"/>
    <property type="project" value="InterPro"/>
</dbReference>
<dbReference type="GO" id="GO:0006412">
    <property type="term" value="P:translation"/>
    <property type="evidence" value="ECO:0007669"/>
    <property type="project" value="UniProtKB-UniRule"/>
</dbReference>
<dbReference type="CDD" id="cd02412">
    <property type="entry name" value="KH-II_30S_S3"/>
    <property type="match status" value="1"/>
</dbReference>
<dbReference type="FunFam" id="3.30.1140.32:FF:000009">
    <property type="entry name" value="30S ribosomal protein S3"/>
    <property type="match status" value="1"/>
</dbReference>
<dbReference type="FunFam" id="3.30.300.20:FF:000001">
    <property type="entry name" value="30S ribosomal protein S3"/>
    <property type="match status" value="1"/>
</dbReference>
<dbReference type="Gene3D" id="3.30.300.20">
    <property type="match status" value="1"/>
</dbReference>
<dbReference type="Gene3D" id="3.30.1140.32">
    <property type="entry name" value="Ribosomal protein S3, C-terminal domain"/>
    <property type="match status" value="1"/>
</dbReference>
<dbReference type="HAMAP" id="MF_01309_B">
    <property type="entry name" value="Ribosomal_uS3_B"/>
    <property type="match status" value="1"/>
</dbReference>
<dbReference type="InterPro" id="IPR004087">
    <property type="entry name" value="KH_dom"/>
</dbReference>
<dbReference type="InterPro" id="IPR015946">
    <property type="entry name" value="KH_dom-like_a/b"/>
</dbReference>
<dbReference type="InterPro" id="IPR004044">
    <property type="entry name" value="KH_dom_type_2"/>
</dbReference>
<dbReference type="InterPro" id="IPR009019">
    <property type="entry name" value="KH_sf_prok-type"/>
</dbReference>
<dbReference type="InterPro" id="IPR036419">
    <property type="entry name" value="Ribosomal_S3_C_sf"/>
</dbReference>
<dbReference type="InterPro" id="IPR005704">
    <property type="entry name" value="Ribosomal_uS3_bac-typ"/>
</dbReference>
<dbReference type="InterPro" id="IPR001351">
    <property type="entry name" value="Ribosomal_uS3_C"/>
</dbReference>
<dbReference type="InterPro" id="IPR018280">
    <property type="entry name" value="Ribosomal_uS3_CS"/>
</dbReference>
<dbReference type="NCBIfam" id="TIGR01009">
    <property type="entry name" value="rpsC_bact"/>
    <property type="match status" value="1"/>
</dbReference>
<dbReference type="PANTHER" id="PTHR11760">
    <property type="entry name" value="30S/40S RIBOSOMAL PROTEIN S3"/>
    <property type="match status" value="1"/>
</dbReference>
<dbReference type="PANTHER" id="PTHR11760:SF19">
    <property type="entry name" value="SMALL RIBOSOMAL SUBUNIT PROTEIN US3C"/>
    <property type="match status" value="1"/>
</dbReference>
<dbReference type="Pfam" id="PF07650">
    <property type="entry name" value="KH_2"/>
    <property type="match status" value="1"/>
</dbReference>
<dbReference type="Pfam" id="PF00189">
    <property type="entry name" value="Ribosomal_S3_C"/>
    <property type="match status" value="1"/>
</dbReference>
<dbReference type="SMART" id="SM00322">
    <property type="entry name" value="KH"/>
    <property type="match status" value="1"/>
</dbReference>
<dbReference type="SUPFAM" id="SSF54814">
    <property type="entry name" value="Prokaryotic type KH domain (KH-domain type II)"/>
    <property type="match status" value="1"/>
</dbReference>
<dbReference type="SUPFAM" id="SSF54821">
    <property type="entry name" value="Ribosomal protein S3 C-terminal domain"/>
    <property type="match status" value="1"/>
</dbReference>
<dbReference type="PROSITE" id="PS50823">
    <property type="entry name" value="KH_TYPE_2"/>
    <property type="match status" value="1"/>
</dbReference>
<dbReference type="PROSITE" id="PS00548">
    <property type="entry name" value="RIBOSOMAL_S3"/>
    <property type="match status" value="1"/>
</dbReference>
<protein>
    <recommendedName>
        <fullName evidence="1">Small ribosomal subunit protein uS3</fullName>
    </recommendedName>
    <alternativeName>
        <fullName evidence="3">30S ribosomal protein S3</fullName>
    </alternativeName>
</protein>